<keyword id="KW-0004">4Fe-4S</keyword>
<keyword id="KW-0963">Cytoplasm</keyword>
<keyword id="KW-0408">Iron</keyword>
<keyword id="KW-0411">Iron-sulfur</keyword>
<keyword id="KW-0479">Metal-binding</keyword>
<keyword id="KW-0662">Pyridine nucleotide biosynthesis</keyword>
<keyword id="KW-0808">Transferase</keyword>
<accession>A7Z774</accession>
<gene>
    <name evidence="1" type="primary">nadA</name>
    <name type="ordered locus">RBAM_024900</name>
</gene>
<protein>
    <recommendedName>
        <fullName evidence="1">Quinolinate synthase</fullName>
        <ecNumber evidence="1">2.5.1.72</ecNumber>
    </recommendedName>
</protein>
<dbReference type="EC" id="2.5.1.72" evidence="1"/>
<dbReference type="EMBL" id="CP000560">
    <property type="protein sequence ID" value="ABS74850.1"/>
    <property type="molecule type" value="Genomic_DNA"/>
</dbReference>
<dbReference type="RefSeq" id="WP_012118097.1">
    <property type="nucleotide sequence ID" value="NC_009725.2"/>
</dbReference>
<dbReference type="SMR" id="A7Z774"/>
<dbReference type="GeneID" id="93081632"/>
<dbReference type="KEGG" id="bay:RBAM_024900"/>
<dbReference type="HOGENOM" id="CLU_047382_2_0_9"/>
<dbReference type="UniPathway" id="UPA00253">
    <property type="reaction ID" value="UER00327"/>
</dbReference>
<dbReference type="Proteomes" id="UP000001120">
    <property type="component" value="Chromosome"/>
</dbReference>
<dbReference type="GO" id="GO:0005829">
    <property type="term" value="C:cytosol"/>
    <property type="evidence" value="ECO:0007669"/>
    <property type="project" value="TreeGrafter"/>
</dbReference>
<dbReference type="GO" id="GO:0051539">
    <property type="term" value="F:4 iron, 4 sulfur cluster binding"/>
    <property type="evidence" value="ECO:0007669"/>
    <property type="project" value="UniProtKB-KW"/>
</dbReference>
<dbReference type="GO" id="GO:0046872">
    <property type="term" value="F:metal ion binding"/>
    <property type="evidence" value="ECO:0007669"/>
    <property type="project" value="UniProtKB-KW"/>
</dbReference>
<dbReference type="GO" id="GO:0008987">
    <property type="term" value="F:quinolinate synthetase A activity"/>
    <property type="evidence" value="ECO:0007669"/>
    <property type="project" value="UniProtKB-UniRule"/>
</dbReference>
<dbReference type="GO" id="GO:0034628">
    <property type="term" value="P:'de novo' NAD biosynthetic process from L-aspartate"/>
    <property type="evidence" value="ECO:0007669"/>
    <property type="project" value="TreeGrafter"/>
</dbReference>
<dbReference type="FunFam" id="3.40.50.10800:FF:000001">
    <property type="entry name" value="Quinolinate synthase A"/>
    <property type="match status" value="1"/>
</dbReference>
<dbReference type="Gene3D" id="3.40.50.10800">
    <property type="entry name" value="NadA-like"/>
    <property type="match status" value="3"/>
</dbReference>
<dbReference type="HAMAP" id="MF_00569">
    <property type="entry name" value="NadA_type3"/>
    <property type="match status" value="1"/>
</dbReference>
<dbReference type="InterPro" id="IPR003473">
    <property type="entry name" value="NadA"/>
</dbReference>
<dbReference type="InterPro" id="IPR036094">
    <property type="entry name" value="NadA_sf"/>
</dbReference>
<dbReference type="InterPro" id="IPR023515">
    <property type="entry name" value="Quinolinate_synth_A_type3"/>
</dbReference>
<dbReference type="NCBIfam" id="TIGR00550">
    <property type="entry name" value="nadA"/>
    <property type="match status" value="1"/>
</dbReference>
<dbReference type="NCBIfam" id="NF006880">
    <property type="entry name" value="PRK09375.2-1"/>
    <property type="match status" value="1"/>
</dbReference>
<dbReference type="NCBIfam" id="NF006883">
    <property type="entry name" value="PRK09375.2-4"/>
    <property type="match status" value="1"/>
</dbReference>
<dbReference type="PANTHER" id="PTHR30573:SF0">
    <property type="entry name" value="QUINOLINATE SYNTHASE, CHLOROPLASTIC"/>
    <property type="match status" value="1"/>
</dbReference>
<dbReference type="PANTHER" id="PTHR30573">
    <property type="entry name" value="QUINOLINATE SYNTHETASE A"/>
    <property type="match status" value="1"/>
</dbReference>
<dbReference type="Pfam" id="PF02445">
    <property type="entry name" value="NadA"/>
    <property type="match status" value="1"/>
</dbReference>
<dbReference type="SUPFAM" id="SSF142754">
    <property type="entry name" value="NadA-like"/>
    <property type="match status" value="1"/>
</dbReference>
<comment type="function">
    <text evidence="1">Catalyzes the condensation of iminoaspartate with dihydroxyacetone phosphate to form quinolinate.</text>
</comment>
<comment type="catalytic activity">
    <reaction evidence="1">
        <text>iminosuccinate + dihydroxyacetone phosphate = quinolinate + phosphate + 2 H2O + H(+)</text>
        <dbReference type="Rhea" id="RHEA:25888"/>
        <dbReference type="ChEBI" id="CHEBI:15377"/>
        <dbReference type="ChEBI" id="CHEBI:15378"/>
        <dbReference type="ChEBI" id="CHEBI:29959"/>
        <dbReference type="ChEBI" id="CHEBI:43474"/>
        <dbReference type="ChEBI" id="CHEBI:57642"/>
        <dbReference type="ChEBI" id="CHEBI:77875"/>
        <dbReference type="EC" id="2.5.1.72"/>
    </reaction>
    <physiologicalReaction direction="left-to-right" evidence="1">
        <dbReference type="Rhea" id="RHEA:25889"/>
    </physiologicalReaction>
</comment>
<comment type="cofactor">
    <cofactor evidence="1">
        <name>[4Fe-4S] cluster</name>
        <dbReference type="ChEBI" id="CHEBI:49883"/>
    </cofactor>
    <text evidence="1">Binds 1 [4Fe-4S] cluster per subunit.</text>
</comment>
<comment type="pathway">
    <text evidence="1">Cofactor biosynthesis; NAD(+) biosynthesis; quinolinate from iminoaspartate: step 1/1.</text>
</comment>
<comment type="subcellular location">
    <subcellularLocation>
        <location evidence="1">Cytoplasm</location>
    </subcellularLocation>
</comment>
<comment type="similarity">
    <text evidence="1">Belongs to the quinolinate synthase family. Type 3 subfamily.</text>
</comment>
<name>NADA_BACVZ</name>
<reference key="1">
    <citation type="journal article" date="2007" name="Nat. Biotechnol.">
        <title>Comparative analysis of the complete genome sequence of the plant growth-promoting bacterium Bacillus amyloliquefaciens FZB42.</title>
        <authorList>
            <person name="Chen X.H."/>
            <person name="Koumoutsi A."/>
            <person name="Scholz R."/>
            <person name="Eisenreich A."/>
            <person name="Schneider K."/>
            <person name="Heinemeyer I."/>
            <person name="Morgenstern B."/>
            <person name="Voss B."/>
            <person name="Hess W.R."/>
            <person name="Reva O."/>
            <person name="Junge H."/>
            <person name="Voigt B."/>
            <person name="Jungblut P.R."/>
            <person name="Vater J."/>
            <person name="Suessmuth R."/>
            <person name="Liesegang H."/>
            <person name="Strittmatter A."/>
            <person name="Gottschalk G."/>
            <person name="Borriss R."/>
        </authorList>
    </citation>
    <scope>NUCLEOTIDE SEQUENCE [LARGE SCALE GENOMIC DNA]</scope>
    <source>
        <strain>DSM 23117 / BGSC 10A6 / LMG 26770 / FZB42</strain>
    </source>
</reference>
<feature type="chain" id="PRO_1000024982" description="Quinolinate synthase">
    <location>
        <begin position="1"/>
        <end position="367"/>
    </location>
</feature>
<feature type="binding site" evidence="1">
    <location>
        <position position="46"/>
    </location>
    <ligand>
        <name>iminosuccinate</name>
        <dbReference type="ChEBI" id="CHEBI:77875"/>
    </ligand>
</feature>
<feature type="binding site" evidence="1">
    <location>
        <position position="63"/>
    </location>
    <ligand>
        <name>iminosuccinate</name>
        <dbReference type="ChEBI" id="CHEBI:77875"/>
    </ligand>
</feature>
<feature type="binding site" evidence="1">
    <location>
        <position position="110"/>
    </location>
    <ligand>
        <name>[4Fe-4S] cluster</name>
        <dbReference type="ChEBI" id="CHEBI:49883"/>
    </ligand>
</feature>
<feature type="binding site" evidence="1">
    <location>
        <begin position="141"/>
        <end position="143"/>
    </location>
    <ligand>
        <name>iminosuccinate</name>
        <dbReference type="ChEBI" id="CHEBI:77875"/>
    </ligand>
</feature>
<feature type="binding site" evidence="1">
    <location>
        <position position="162"/>
    </location>
    <ligand>
        <name>iminosuccinate</name>
        <dbReference type="ChEBI" id="CHEBI:77875"/>
    </ligand>
</feature>
<feature type="binding site" evidence="1">
    <location>
        <position position="229"/>
    </location>
    <ligand>
        <name>[4Fe-4S] cluster</name>
        <dbReference type="ChEBI" id="CHEBI:49883"/>
    </ligand>
</feature>
<feature type="binding site" evidence="1">
    <location>
        <begin position="255"/>
        <end position="257"/>
    </location>
    <ligand>
        <name>iminosuccinate</name>
        <dbReference type="ChEBI" id="CHEBI:77875"/>
    </ligand>
</feature>
<feature type="binding site" evidence="1">
    <location>
        <position position="272"/>
    </location>
    <ligand>
        <name>iminosuccinate</name>
        <dbReference type="ChEBI" id="CHEBI:77875"/>
    </ligand>
</feature>
<feature type="binding site" evidence="1">
    <location>
        <position position="319"/>
    </location>
    <ligand>
        <name>[4Fe-4S] cluster</name>
        <dbReference type="ChEBI" id="CHEBI:49883"/>
    </ligand>
</feature>
<sequence length="367" mass="41352">MSIFDVLTASAEMMPSHYKDMSTGEMEKRVAAIKRAFGKRLFIPGHHYQKDEVIQFADTAGDSLQLAQVAEKNKEAEYIVFCGVHFMAETADMLTDDNQTVILPDMRAGCSMADMADIQQTDKAWQELQELYGNTIIPLTYVNSTAEIKAFVGRHGGATVTSSNARSVLKWAFKQKERILFLPDQHLGRNTAYDLGIPLTEMAVWDPVQNRLLTDHPENIKVILWKGHCSVHEKFTAENISQLRQRDSGIRIIVHPECSREVVSLSDDSGSTKYIIDTIEQAEPGSKWAIGTEMNLVQRLIHSHPDKQIESLNPDMCPCLTMNRIDLPHLLWSLEQLEKGEPKGVIKVPEAVRTEALRALNRMLSHT</sequence>
<organism>
    <name type="scientific">Bacillus velezensis (strain DSM 23117 / BGSC 10A6 / LMG 26770 / FZB42)</name>
    <name type="common">Bacillus amyloliquefaciens subsp. plantarum</name>
    <dbReference type="NCBI Taxonomy" id="326423"/>
    <lineage>
        <taxon>Bacteria</taxon>
        <taxon>Bacillati</taxon>
        <taxon>Bacillota</taxon>
        <taxon>Bacilli</taxon>
        <taxon>Bacillales</taxon>
        <taxon>Bacillaceae</taxon>
        <taxon>Bacillus</taxon>
        <taxon>Bacillus amyloliquefaciens group</taxon>
    </lineage>
</organism>
<evidence type="ECO:0000255" key="1">
    <source>
        <dbReference type="HAMAP-Rule" id="MF_00569"/>
    </source>
</evidence>
<proteinExistence type="inferred from homology"/>